<proteinExistence type="evidence at protein level"/>
<comment type="function">
    <text evidence="1">Has anticoagulant activity, since it is able to inhibit the activation of coagulation factor X (F10) by coagulation factor VIIa (F7) (IC(50)=123.8 nM) (PubMed:27173146). Also shows weak irreversible neurotoxicity (PubMed:27173146).</text>
</comment>
<comment type="subcellular location">
    <subcellularLocation>
        <location evidence="1">Secreted</location>
    </subcellularLocation>
</comment>
<comment type="tissue specificity">
    <text evidence="4">Expressed by the venom gland.</text>
</comment>
<comment type="mass spectrometry" mass="7437.0" method="Electrospray" evidence="1"/>
<comment type="similarity">
    <text evidence="3">Belongs to the three-finger toxin family. Short-chain subfamily. Orphan group I sub-subfamily.</text>
</comment>
<evidence type="ECO:0000269" key="1">
    <source>
    </source>
</evidence>
<evidence type="ECO:0000303" key="2">
    <source>
    </source>
</evidence>
<evidence type="ECO:0000305" key="3"/>
<evidence type="ECO:0000305" key="4">
    <source>
    </source>
</evidence>
<evidence type="ECO:0007744" key="5">
    <source>
        <dbReference type="PDB" id="4ZQY"/>
    </source>
</evidence>
<evidence type="ECO:0007829" key="6">
    <source>
        <dbReference type="PDB" id="4ZQY"/>
    </source>
</evidence>
<sequence length="65" mass="7446">RLCLSDYSIFSETIEICPEGHNYCFKKFPKGITRLPWVIRGCAATCPKPEAQVYVDCCARDKCNR</sequence>
<organism>
    <name type="scientific">Hemachatus haemachatus</name>
    <name type="common">Rinkhals</name>
    <name type="synonym">Sepedon haemachatus</name>
    <dbReference type="NCBI Taxonomy" id="8626"/>
    <lineage>
        <taxon>Eukaryota</taxon>
        <taxon>Metazoa</taxon>
        <taxon>Chordata</taxon>
        <taxon>Craniata</taxon>
        <taxon>Vertebrata</taxon>
        <taxon>Euteleostomi</taxon>
        <taxon>Lepidosauria</taxon>
        <taxon>Squamata</taxon>
        <taxon>Bifurcata</taxon>
        <taxon>Unidentata</taxon>
        <taxon>Episquamata</taxon>
        <taxon>Toxicofera</taxon>
        <taxon>Serpentes</taxon>
        <taxon>Colubroidea</taxon>
        <taxon>Elapidae</taxon>
        <taxon>Elapinae</taxon>
        <taxon>Hemachatus</taxon>
    </lineage>
</organism>
<dbReference type="PDB" id="4ZQY">
    <property type="method" value="X-ray"/>
    <property type="resolution" value="2.95 A"/>
    <property type="chains" value="A/B/C=1-65"/>
</dbReference>
<dbReference type="PDBsum" id="4ZQY"/>
<dbReference type="SMR" id="C0HJT5"/>
<dbReference type="GO" id="GO:0005576">
    <property type="term" value="C:extracellular region"/>
    <property type="evidence" value="ECO:0007669"/>
    <property type="project" value="UniProtKB-SubCell"/>
</dbReference>
<dbReference type="GO" id="GO:0090729">
    <property type="term" value="F:toxin activity"/>
    <property type="evidence" value="ECO:0007669"/>
    <property type="project" value="UniProtKB-KW"/>
</dbReference>
<dbReference type="GO" id="GO:0044470">
    <property type="term" value="P:venom-mediated suppression of blood coagulation"/>
    <property type="evidence" value="ECO:0000314"/>
    <property type="project" value="UniProtKB"/>
</dbReference>
<dbReference type="CDD" id="cd00206">
    <property type="entry name" value="TFP_snake_toxin"/>
    <property type="match status" value="1"/>
</dbReference>
<dbReference type="FunFam" id="2.10.60.10:FF:000024">
    <property type="entry name" value="Cytotoxin 1"/>
    <property type="match status" value="1"/>
</dbReference>
<dbReference type="Gene3D" id="2.10.60.10">
    <property type="entry name" value="CD59"/>
    <property type="match status" value="1"/>
</dbReference>
<dbReference type="InterPro" id="IPR003571">
    <property type="entry name" value="Snake_3FTx"/>
</dbReference>
<dbReference type="InterPro" id="IPR045860">
    <property type="entry name" value="Snake_toxin-like_sf"/>
</dbReference>
<dbReference type="InterPro" id="IPR018354">
    <property type="entry name" value="Snake_toxin_con_site"/>
</dbReference>
<dbReference type="InterPro" id="IPR054131">
    <property type="entry name" value="Toxin_cobra-type"/>
</dbReference>
<dbReference type="Pfam" id="PF21947">
    <property type="entry name" value="Toxin_cobra-type"/>
    <property type="match status" value="1"/>
</dbReference>
<dbReference type="SUPFAM" id="SSF57302">
    <property type="entry name" value="Snake toxin-like"/>
    <property type="match status" value="1"/>
</dbReference>
<dbReference type="PROSITE" id="PS00272">
    <property type="entry name" value="SNAKE_TOXIN"/>
    <property type="match status" value="1"/>
</dbReference>
<reference evidence="5" key="1">
    <citation type="journal article" date="2016" name="Sci. Rep.">
        <title>Ringhalexin from Hemachatus haemachatus: A novel inhibitor of extrinsic tenase complex.</title>
        <authorList>
            <person name="Barnwal B."/>
            <person name="Jobichen C."/>
            <person name="Girish V.M."/>
            <person name="Foo C.S."/>
            <person name="Sivaraman J."/>
            <person name="Kini R.M."/>
        </authorList>
    </citation>
    <scope>PROTEIN SEQUENCE</scope>
    <scope>FUNCTION</scope>
    <scope>MASS SPECTROMETRY</scope>
    <scope>SUBCELLULAR LOCATION</scope>
    <scope>DISULFIDE BONDS</scope>
    <scope>X-RAY CRYSTALLOGRAPHY (2.95 ANGSTROMS)</scope>
    <source>
        <tissue>Venom</tissue>
    </source>
</reference>
<keyword id="KW-0002">3D-structure</keyword>
<keyword id="KW-1203">Blood coagulation cascade inhibiting toxin</keyword>
<keyword id="KW-0903">Direct protein sequencing</keyword>
<keyword id="KW-1015">Disulfide bond</keyword>
<keyword id="KW-1199">Hemostasis impairing toxin</keyword>
<keyword id="KW-0528">Neurotoxin</keyword>
<keyword id="KW-0964">Secreted</keyword>
<keyword id="KW-0800">Toxin</keyword>
<name>3SO1_HEMHA</name>
<feature type="chain" id="PRO_0000433406" description="Ringhalexin" evidence="1">
    <location>
        <begin position="1"/>
        <end position="65"/>
    </location>
</feature>
<feature type="disulfide bond" evidence="1 5">
    <location>
        <begin position="3"/>
        <end position="24"/>
    </location>
</feature>
<feature type="disulfide bond" evidence="1 5">
    <location>
        <begin position="17"/>
        <end position="42"/>
    </location>
</feature>
<feature type="disulfide bond" evidence="1 5">
    <location>
        <begin position="46"/>
        <end position="57"/>
    </location>
</feature>
<feature type="disulfide bond" evidence="1 5">
    <location>
        <begin position="58"/>
        <end position="63"/>
    </location>
</feature>
<feature type="strand" evidence="6">
    <location>
        <begin position="2"/>
        <end position="7"/>
    </location>
</feature>
<feature type="strand" evidence="6">
    <location>
        <begin position="12"/>
        <end position="16"/>
    </location>
</feature>
<feature type="strand" evidence="6">
    <location>
        <begin position="23"/>
        <end position="31"/>
    </location>
</feature>
<feature type="strand" evidence="6">
    <location>
        <begin position="39"/>
        <end position="45"/>
    </location>
</feature>
<feature type="strand" evidence="6">
    <location>
        <begin position="53"/>
        <end position="58"/>
    </location>
</feature>
<protein>
    <recommendedName>
        <fullName evidence="2">Ringhalexin</fullName>
    </recommendedName>
</protein>
<accession>C0HJT5</accession>